<keyword id="KW-0965">Cell junction</keyword>
<keyword id="KW-1003">Cell membrane</keyword>
<keyword id="KW-0966">Cell projection</keyword>
<keyword id="KW-0963">Cytoplasm</keyword>
<keyword id="KW-0446">Lipid-binding</keyword>
<keyword id="KW-0472">Membrane</keyword>
<keyword id="KW-0597">Phosphoprotein</keyword>
<keyword id="KW-1185">Reference proteome</keyword>
<keyword id="KW-0678">Repressor</keyword>
<keyword id="KW-0694">RNA-binding</keyword>
<keyword id="KW-0727">SH2 domain</keyword>
<organism>
    <name type="scientific">Mus musculus</name>
    <name type="common">Mouse</name>
    <dbReference type="NCBI Taxonomy" id="10090"/>
    <lineage>
        <taxon>Eukaryota</taxon>
        <taxon>Metazoa</taxon>
        <taxon>Chordata</taxon>
        <taxon>Craniata</taxon>
        <taxon>Vertebrata</taxon>
        <taxon>Euteleostomi</taxon>
        <taxon>Mammalia</taxon>
        <taxon>Eutheria</taxon>
        <taxon>Euarchontoglires</taxon>
        <taxon>Glires</taxon>
        <taxon>Rodentia</taxon>
        <taxon>Myomorpha</taxon>
        <taxon>Muroidea</taxon>
        <taxon>Muridae</taxon>
        <taxon>Murinae</taxon>
        <taxon>Mus</taxon>
        <taxon>Mus</taxon>
    </lineage>
</organism>
<evidence type="ECO:0000250" key="1"/>
<evidence type="ECO:0000250" key="2">
    <source>
        <dbReference type="UniProtKB" id="Q14451"/>
    </source>
</evidence>
<evidence type="ECO:0000255" key="3">
    <source>
        <dbReference type="PROSITE-ProRule" id="PRU00145"/>
    </source>
</evidence>
<evidence type="ECO:0000255" key="4">
    <source>
        <dbReference type="PROSITE-ProRule" id="PRU00166"/>
    </source>
</evidence>
<evidence type="ECO:0000255" key="5">
    <source>
        <dbReference type="PROSITE-ProRule" id="PRU00191"/>
    </source>
</evidence>
<evidence type="ECO:0000256" key="6">
    <source>
        <dbReference type="SAM" id="MobiDB-lite"/>
    </source>
</evidence>
<evidence type="ECO:0000269" key="7">
    <source>
    </source>
</evidence>
<evidence type="ECO:0000269" key="8">
    <source>
    </source>
</evidence>
<evidence type="ECO:0000269" key="9">
    <source>
    </source>
</evidence>
<evidence type="ECO:0000269" key="10">
    <source>
    </source>
</evidence>
<evidence type="ECO:0000269" key="11">
    <source>
    </source>
</evidence>
<evidence type="ECO:0000269" key="12">
    <source>
    </source>
</evidence>
<evidence type="ECO:0000305" key="13"/>
<feature type="chain" id="PRO_0000150345" description="Growth factor receptor-bound protein 7">
    <location>
        <begin position="1"/>
        <end position="535"/>
    </location>
</feature>
<feature type="domain" description="Ras-associating" evidence="4">
    <location>
        <begin position="99"/>
        <end position="185"/>
    </location>
</feature>
<feature type="domain" description="PH" evidence="3">
    <location>
        <begin position="228"/>
        <end position="341"/>
    </location>
</feature>
<feature type="domain" description="SH2" evidence="5">
    <location>
        <begin position="434"/>
        <end position="530"/>
    </location>
</feature>
<feature type="region of interest" description="Disordered" evidence="6">
    <location>
        <begin position="1"/>
        <end position="90"/>
    </location>
</feature>
<feature type="compositionally biased region" description="Pro residues" evidence="6">
    <location>
        <begin position="21"/>
        <end position="37"/>
    </location>
</feature>
<feature type="modified residue" description="Phosphotyrosine; by FAK1" evidence="2">
    <location>
        <position position="187"/>
    </location>
</feature>
<feature type="modified residue" description="Phosphotyrosine; by FAK1" evidence="2">
    <location>
        <position position="341"/>
    </location>
</feature>
<feature type="modified residue" description="Phosphoserine" evidence="2">
    <location>
        <position position="364"/>
    </location>
</feature>
<feature type="mutagenesis site" description="Abolishes interaction with FHL2.">
    <original>Y</original>
    <variation>F</variation>
    <location>
        <position position="262"/>
    </location>
</feature>
<feature type="mutagenesis site" description="Abolishes interaction with FHL2.">
    <original>Y</original>
    <variation>F</variation>
    <location>
        <position position="263"/>
    </location>
</feature>
<feature type="mutagenesis site" description="Abolishes interaction with FHL2.">
    <original>Y</original>
    <variation>F</variation>
    <location>
        <position position="287"/>
    </location>
</feature>
<feature type="mutagenesis site" description="Strongly reduced tyrosine phosphorylation. Abolishes interaction with FHL2." evidence="9">
    <original>Y</original>
    <variation>F</variation>
    <location>
        <position position="483"/>
    </location>
</feature>
<feature type="mutagenesis site" description="Strongly reduced tyrosine phosphorylation. Abolishes interaction with FHL2." evidence="9">
    <original>Y</original>
    <variation>F</variation>
    <location>
        <position position="495"/>
    </location>
</feature>
<name>GRB7_MOUSE</name>
<dbReference type="EMBL" id="M94450">
    <property type="protein sequence ID" value="AAA37733.1"/>
    <property type="molecule type" value="mRNA"/>
</dbReference>
<dbReference type="EMBL" id="AK145996">
    <property type="protein sequence ID" value="BAE26817.1"/>
    <property type="molecule type" value="mRNA"/>
</dbReference>
<dbReference type="EMBL" id="AK168438">
    <property type="protein sequence ID" value="BAE40343.1"/>
    <property type="molecule type" value="mRNA"/>
</dbReference>
<dbReference type="EMBL" id="AL591390">
    <property type="status" value="NOT_ANNOTATED_CDS"/>
    <property type="molecule type" value="Genomic_DNA"/>
</dbReference>
<dbReference type="EMBL" id="CH466556">
    <property type="protein sequence ID" value="EDL16144.1"/>
    <property type="molecule type" value="Genomic_DNA"/>
</dbReference>
<dbReference type="EMBL" id="BC003295">
    <property type="protein sequence ID" value="AAH03295.1"/>
    <property type="molecule type" value="mRNA"/>
</dbReference>
<dbReference type="CCDS" id="CCDS25351.1"/>
<dbReference type="PIR" id="C46243">
    <property type="entry name" value="C46243"/>
</dbReference>
<dbReference type="RefSeq" id="NP_034476.1">
    <property type="nucleotide sequence ID" value="NM_010346.2"/>
</dbReference>
<dbReference type="RefSeq" id="XP_006532296.1">
    <property type="nucleotide sequence ID" value="XM_006532233.1"/>
</dbReference>
<dbReference type="RefSeq" id="XP_030101435.1">
    <property type="nucleotide sequence ID" value="XM_030245575.1"/>
</dbReference>
<dbReference type="SMR" id="Q03160"/>
<dbReference type="BioGRID" id="200047">
    <property type="interactions" value="2"/>
</dbReference>
<dbReference type="CORUM" id="Q03160"/>
<dbReference type="DIP" id="DIP-43965N"/>
<dbReference type="FunCoup" id="Q03160">
    <property type="interactions" value="28"/>
</dbReference>
<dbReference type="IntAct" id="Q03160">
    <property type="interactions" value="7"/>
</dbReference>
<dbReference type="MINT" id="Q03160"/>
<dbReference type="STRING" id="10090.ENSMUSP00000019456"/>
<dbReference type="GlyGen" id="Q03160">
    <property type="glycosylation" value="2 sites"/>
</dbReference>
<dbReference type="iPTMnet" id="Q03160"/>
<dbReference type="PhosphoSitePlus" id="Q03160"/>
<dbReference type="PaxDb" id="10090-ENSMUSP00000019456"/>
<dbReference type="PeptideAtlas" id="Q03160"/>
<dbReference type="ProteomicsDB" id="271327"/>
<dbReference type="Antibodypedia" id="3928">
    <property type="antibodies" value="364 antibodies from 37 providers"/>
</dbReference>
<dbReference type="DNASU" id="14786"/>
<dbReference type="Ensembl" id="ENSMUST00000019456.5">
    <property type="protein sequence ID" value="ENSMUSP00000019456.5"/>
    <property type="gene ID" value="ENSMUSG00000019312.11"/>
</dbReference>
<dbReference type="GeneID" id="14786"/>
<dbReference type="KEGG" id="mmu:14786"/>
<dbReference type="UCSC" id="uc007lgk.1">
    <property type="organism name" value="mouse"/>
</dbReference>
<dbReference type="AGR" id="MGI:102683"/>
<dbReference type="CTD" id="2886"/>
<dbReference type="MGI" id="MGI:102683">
    <property type="gene designation" value="Grb7"/>
</dbReference>
<dbReference type="VEuPathDB" id="HostDB:ENSMUSG00000019312"/>
<dbReference type="eggNOG" id="KOG3751">
    <property type="taxonomic scope" value="Eukaryota"/>
</dbReference>
<dbReference type="GeneTree" id="ENSGT00940000158710"/>
<dbReference type="HOGENOM" id="CLU_023207_0_1_1"/>
<dbReference type="InParanoid" id="Q03160"/>
<dbReference type="OMA" id="KLWKRCF"/>
<dbReference type="OrthoDB" id="5977126at2759"/>
<dbReference type="PhylomeDB" id="Q03160"/>
<dbReference type="TreeFam" id="TF317511"/>
<dbReference type="Reactome" id="R-MMU-1306955">
    <property type="pathway name" value="GRB7 events in ERBB2 signaling"/>
</dbReference>
<dbReference type="Reactome" id="R-MMU-1433557">
    <property type="pathway name" value="Signaling by SCF-KIT"/>
</dbReference>
<dbReference type="Reactome" id="R-MMU-186763">
    <property type="pathway name" value="Downstream signal transduction"/>
</dbReference>
<dbReference type="Reactome" id="R-MMU-210993">
    <property type="pathway name" value="Tie2 Signaling"/>
</dbReference>
<dbReference type="Reactome" id="R-MMU-8853659">
    <property type="pathway name" value="RET signaling"/>
</dbReference>
<dbReference type="Reactome" id="R-MMU-9696273">
    <property type="pathway name" value="RND1 GTPase cycle"/>
</dbReference>
<dbReference type="BioGRID-ORCS" id="14786">
    <property type="hits" value="4 hits in 78 CRISPR screens"/>
</dbReference>
<dbReference type="PRO" id="PR:Q03160"/>
<dbReference type="Proteomes" id="UP000000589">
    <property type="component" value="Chromosome 11"/>
</dbReference>
<dbReference type="RNAct" id="Q03160">
    <property type="molecule type" value="protein"/>
</dbReference>
<dbReference type="Bgee" id="ENSMUSG00000019312">
    <property type="expression patterns" value="Expressed in ileal epithelium and 161 other cell types or tissues"/>
</dbReference>
<dbReference type="ExpressionAtlas" id="Q03160">
    <property type="expression patterns" value="baseline and differential"/>
</dbReference>
<dbReference type="GO" id="GO:0042995">
    <property type="term" value="C:cell projection"/>
    <property type="evidence" value="ECO:0007669"/>
    <property type="project" value="UniProtKB-SubCell"/>
</dbReference>
<dbReference type="GO" id="GO:0010494">
    <property type="term" value="C:cytoplasmic stress granule"/>
    <property type="evidence" value="ECO:0000314"/>
    <property type="project" value="UniProtKB"/>
</dbReference>
<dbReference type="GO" id="GO:0005829">
    <property type="term" value="C:cytosol"/>
    <property type="evidence" value="ECO:0000250"/>
    <property type="project" value="UniProtKB"/>
</dbReference>
<dbReference type="GO" id="GO:0005925">
    <property type="term" value="C:focal adhesion"/>
    <property type="evidence" value="ECO:0000250"/>
    <property type="project" value="UniProtKB"/>
</dbReference>
<dbReference type="GO" id="GO:0005886">
    <property type="term" value="C:plasma membrane"/>
    <property type="evidence" value="ECO:0007669"/>
    <property type="project" value="UniProtKB-SubCell"/>
</dbReference>
<dbReference type="GO" id="GO:0042802">
    <property type="term" value="F:identical protein binding"/>
    <property type="evidence" value="ECO:0007669"/>
    <property type="project" value="Ensembl"/>
</dbReference>
<dbReference type="GO" id="GO:0035091">
    <property type="term" value="F:phosphatidylinositol binding"/>
    <property type="evidence" value="ECO:0000250"/>
    <property type="project" value="UniProtKB"/>
</dbReference>
<dbReference type="GO" id="GO:0019901">
    <property type="term" value="F:protein kinase binding"/>
    <property type="evidence" value="ECO:0007669"/>
    <property type="project" value="Ensembl"/>
</dbReference>
<dbReference type="GO" id="GO:0003723">
    <property type="term" value="F:RNA binding"/>
    <property type="evidence" value="ECO:0007669"/>
    <property type="project" value="UniProtKB-KW"/>
</dbReference>
<dbReference type="GO" id="GO:0017148">
    <property type="term" value="P:negative regulation of translation"/>
    <property type="evidence" value="ECO:0000315"/>
    <property type="project" value="UniProtKB"/>
</dbReference>
<dbReference type="GO" id="GO:0030335">
    <property type="term" value="P:positive regulation of cell migration"/>
    <property type="evidence" value="ECO:0000250"/>
    <property type="project" value="UniProtKB"/>
</dbReference>
<dbReference type="GO" id="GO:0007165">
    <property type="term" value="P:signal transduction"/>
    <property type="evidence" value="ECO:0000304"/>
    <property type="project" value="MGI"/>
</dbReference>
<dbReference type="GO" id="GO:0034063">
    <property type="term" value="P:stress granule assembly"/>
    <property type="evidence" value="ECO:0000315"/>
    <property type="project" value="UniProtKB"/>
</dbReference>
<dbReference type="CDD" id="cd01259">
    <property type="entry name" value="PH_APBB1IP"/>
    <property type="match status" value="1"/>
</dbReference>
<dbReference type="CDD" id="cd16140">
    <property type="entry name" value="RA_GRB7"/>
    <property type="match status" value="1"/>
</dbReference>
<dbReference type="CDD" id="cd10413">
    <property type="entry name" value="SH2_Grb7"/>
    <property type="match status" value="1"/>
</dbReference>
<dbReference type="FunFam" id="3.30.505.10:FF:000015">
    <property type="entry name" value="Growth factor receptor-bound protein 10 isoform X1"/>
    <property type="match status" value="1"/>
</dbReference>
<dbReference type="FunFam" id="2.30.29.30:FF:000062">
    <property type="entry name" value="growth factor receptor-bound protein 10 isoform X1"/>
    <property type="match status" value="1"/>
</dbReference>
<dbReference type="FunFam" id="3.10.20.90:FF:000056">
    <property type="entry name" value="growth factor receptor-bound protein 10 isoform X1"/>
    <property type="match status" value="1"/>
</dbReference>
<dbReference type="Gene3D" id="3.10.20.90">
    <property type="entry name" value="Phosphatidylinositol 3-kinase Catalytic Subunit, Chain A, domain 1"/>
    <property type="match status" value="1"/>
</dbReference>
<dbReference type="Gene3D" id="2.30.29.30">
    <property type="entry name" value="Pleckstrin-homology domain (PH domain)/Phosphotyrosine-binding domain (PTB)"/>
    <property type="match status" value="1"/>
</dbReference>
<dbReference type="Gene3D" id="3.30.505.10">
    <property type="entry name" value="SH2 domain"/>
    <property type="match status" value="1"/>
</dbReference>
<dbReference type="InterPro" id="IPR015042">
    <property type="entry name" value="BPS-dom"/>
</dbReference>
<dbReference type="InterPro" id="IPR039664">
    <property type="entry name" value="GRB/APBB1IP"/>
</dbReference>
<dbReference type="InterPro" id="IPR046986">
    <property type="entry name" value="GRB7_RA"/>
</dbReference>
<dbReference type="InterPro" id="IPR035032">
    <property type="entry name" value="Grb7_SH2"/>
</dbReference>
<dbReference type="InterPro" id="IPR011993">
    <property type="entry name" value="PH-like_dom_sf"/>
</dbReference>
<dbReference type="InterPro" id="IPR039665">
    <property type="entry name" value="PH_APBB1IP"/>
</dbReference>
<dbReference type="InterPro" id="IPR001849">
    <property type="entry name" value="PH_domain"/>
</dbReference>
<dbReference type="InterPro" id="IPR000159">
    <property type="entry name" value="RA_dom"/>
</dbReference>
<dbReference type="InterPro" id="IPR000980">
    <property type="entry name" value="SH2"/>
</dbReference>
<dbReference type="InterPro" id="IPR036860">
    <property type="entry name" value="SH2_dom_sf"/>
</dbReference>
<dbReference type="InterPro" id="IPR029071">
    <property type="entry name" value="Ubiquitin-like_domsf"/>
</dbReference>
<dbReference type="PANTHER" id="PTHR11243">
    <property type="entry name" value="GROWTH FACTOR RECEPTOR-BOUND PROTEIN"/>
    <property type="match status" value="1"/>
</dbReference>
<dbReference type="PANTHER" id="PTHR11243:SF25">
    <property type="entry name" value="GROWTH FACTOR RECEPTOR-BOUND PROTEIN 7"/>
    <property type="match status" value="1"/>
</dbReference>
<dbReference type="Pfam" id="PF08947">
    <property type="entry name" value="BPS"/>
    <property type="match status" value="1"/>
</dbReference>
<dbReference type="Pfam" id="PF00169">
    <property type="entry name" value="PH"/>
    <property type="match status" value="1"/>
</dbReference>
<dbReference type="Pfam" id="PF21989">
    <property type="entry name" value="RA_2"/>
    <property type="match status" value="1"/>
</dbReference>
<dbReference type="Pfam" id="PF00017">
    <property type="entry name" value="SH2"/>
    <property type="match status" value="1"/>
</dbReference>
<dbReference type="PRINTS" id="PR00401">
    <property type="entry name" value="SH2DOMAIN"/>
</dbReference>
<dbReference type="SMART" id="SM00233">
    <property type="entry name" value="PH"/>
    <property type="match status" value="1"/>
</dbReference>
<dbReference type="SMART" id="SM00314">
    <property type="entry name" value="RA"/>
    <property type="match status" value="1"/>
</dbReference>
<dbReference type="SMART" id="SM00252">
    <property type="entry name" value="SH2"/>
    <property type="match status" value="1"/>
</dbReference>
<dbReference type="SUPFAM" id="SSF50729">
    <property type="entry name" value="PH domain-like"/>
    <property type="match status" value="1"/>
</dbReference>
<dbReference type="SUPFAM" id="SSF55550">
    <property type="entry name" value="SH2 domain"/>
    <property type="match status" value="1"/>
</dbReference>
<dbReference type="SUPFAM" id="SSF54236">
    <property type="entry name" value="Ubiquitin-like"/>
    <property type="match status" value="1"/>
</dbReference>
<dbReference type="PROSITE" id="PS50003">
    <property type="entry name" value="PH_DOMAIN"/>
    <property type="match status" value="1"/>
</dbReference>
<dbReference type="PROSITE" id="PS50200">
    <property type="entry name" value="RA"/>
    <property type="match status" value="1"/>
</dbReference>
<dbReference type="PROSITE" id="PS50001">
    <property type="entry name" value="SH2"/>
    <property type="match status" value="1"/>
</dbReference>
<gene>
    <name type="primary">Grb7</name>
</gene>
<reference key="1">
    <citation type="journal article" date="1992" name="Proc. Natl. Acad. Sci. U.S.A.">
        <title>High-efficiency expression/cloning of epidermal growth factor-receptor-binding proteins with Src homology 2 domains.</title>
        <authorList>
            <person name="Margolis B."/>
            <person name="Silvennoinen O."/>
            <person name="Comoglio F."/>
            <person name="Roonprapunt C."/>
            <person name="Skolnik E.Y."/>
            <person name="Ullrich A."/>
            <person name="Schlessinger J."/>
        </authorList>
    </citation>
    <scope>NUCLEOTIDE SEQUENCE [MRNA]</scope>
    <source>
        <tissue>Embryo</tissue>
    </source>
</reference>
<reference key="2">
    <citation type="journal article" date="2005" name="Science">
        <title>The transcriptional landscape of the mammalian genome.</title>
        <authorList>
            <person name="Carninci P."/>
            <person name="Kasukawa T."/>
            <person name="Katayama S."/>
            <person name="Gough J."/>
            <person name="Frith M.C."/>
            <person name="Maeda N."/>
            <person name="Oyama R."/>
            <person name="Ravasi T."/>
            <person name="Lenhard B."/>
            <person name="Wells C."/>
            <person name="Kodzius R."/>
            <person name="Shimokawa K."/>
            <person name="Bajic V.B."/>
            <person name="Brenner S.E."/>
            <person name="Batalov S."/>
            <person name="Forrest A.R."/>
            <person name="Zavolan M."/>
            <person name="Davis M.J."/>
            <person name="Wilming L.G."/>
            <person name="Aidinis V."/>
            <person name="Allen J.E."/>
            <person name="Ambesi-Impiombato A."/>
            <person name="Apweiler R."/>
            <person name="Aturaliya R.N."/>
            <person name="Bailey T.L."/>
            <person name="Bansal M."/>
            <person name="Baxter L."/>
            <person name="Beisel K.W."/>
            <person name="Bersano T."/>
            <person name="Bono H."/>
            <person name="Chalk A.M."/>
            <person name="Chiu K.P."/>
            <person name="Choudhary V."/>
            <person name="Christoffels A."/>
            <person name="Clutterbuck D.R."/>
            <person name="Crowe M.L."/>
            <person name="Dalla E."/>
            <person name="Dalrymple B.P."/>
            <person name="de Bono B."/>
            <person name="Della Gatta G."/>
            <person name="di Bernardo D."/>
            <person name="Down T."/>
            <person name="Engstrom P."/>
            <person name="Fagiolini M."/>
            <person name="Faulkner G."/>
            <person name="Fletcher C.F."/>
            <person name="Fukushima T."/>
            <person name="Furuno M."/>
            <person name="Futaki S."/>
            <person name="Gariboldi M."/>
            <person name="Georgii-Hemming P."/>
            <person name="Gingeras T.R."/>
            <person name="Gojobori T."/>
            <person name="Green R.E."/>
            <person name="Gustincich S."/>
            <person name="Harbers M."/>
            <person name="Hayashi Y."/>
            <person name="Hensch T.K."/>
            <person name="Hirokawa N."/>
            <person name="Hill D."/>
            <person name="Huminiecki L."/>
            <person name="Iacono M."/>
            <person name="Ikeo K."/>
            <person name="Iwama A."/>
            <person name="Ishikawa T."/>
            <person name="Jakt M."/>
            <person name="Kanapin A."/>
            <person name="Katoh M."/>
            <person name="Kawasawa Y."/>
            <person name="Kelso J."/>
            <person name="Kitamura H."/>
            <person name="Kitano H."/>
            <person name="Kollias G."/>
            <person name="Krishnan S.P."/>
            <person name="Kruger A."/>
            <person name="Kummerfeld S.K."/>
            <person name="Kurochkin I.V."/>
            <person name="Lareau L.F."/>
            <person name="Lazarevic D."/>
            <person name="Lipovich L."/>
            <person name="Liu J."/>
            <person name="Liuni S."/>
            <person name="McWilliam S."/>
            <person name="Madan Babu M."/>
            <person name="Madera M."/>
            <person name="Marchionni L."/>
            <person name="Matsuda H."/>
            <person name="Matsuzawa S."/>
            <person name="Miki H."/>
            <person name="Mignone F."/>
            <person name="Miyake S."/>
            <person name="Morris K."/>
            <person name="Mottagui-Tabar S."/>
            <person name="Mulder N."/>
            <person name="Nakano N."/>
            <person name="Nakauchi H."/>
            <person name="Ng P."/>
            <person name="Nilsson R."/>
            <person name="Nishiguchi S."/>
            <person name="Nishikawa S."/>
            <person name="Nori F."/>
            <person name="Ohara O."/>
            <person name="Okazaki Y."/>
            <person name="Orlando V."/>
            <person name="Pang K.C."/>
            <person name="Pavan W.J."/>
            <person name="Pavesi G."/>
            <person name="Pesole G."/>
            <person name="Petrovsky N."/>
            <person name="Piazza S."/>
            <person name="Reed J."/>
            <person name="Reid J.F."/>
            <person name="Ring B.Z."/>
            <person name="Ringwald M."/>
            <person name="Rost B."/>
            <person name="Ruan Y."/>
            <person name="Salzberg S.L."/>
            <person name="Sandelin A."/>
            <person name="Schneider C."/>
            <person name="Schoenbach C."/>
            <person name="Sekiguchi K."/>
            <person name="Semple C.A."/>
            <person name="Seno S."/>
            <person name="Sessa L."/>
            <person name="Sheng Y."/>
            <person name="Shibata Y."/>
            <person name="Shimada H."/>
            <person name="Shimada K."/>
            <person name="Silva D."/>
            <person name="Sinclair B."/>
            <person name="Sperling S."/>
            <person name="Stupka E."/>
            <person name="Sugiura K."/>
            <person name="Sultana R."/>
            <person name="Takenaka Y."/>
            <person name="Taki K."/>
            <person name="Tammoja K."/>
            <person name="Tan S.L."/>
            <person name="Tang S."/>
            <person name="Taylor M.S."/>
            <person name="Tegner J."/>
            <person name="Teichmann S.A."/>
            <person name="Ueda H.R."/>
            <person name="van Nimwegen E."/>
            <person name="Verardo R."/>
            <person name="Wei C.L."/>
            <person name="Yagi K."/>
            <person name="Yamanishi H."/>
            <person name="Zabarovsky E."/>
            <person name="Zhu S."/>
            <person name="Zimmer A."/>
            <person name="Hide W."/>
            <person name="Bult C."/>
            <person name="Grimmond S.M."/>
            <person name="Teasdale R.D."/>
            <person name="Liu E.T."/>
            <person name="Brusic V."/>
            <person name="Quackenbush J."/>
            <person name="Wahlestedt C."/>
            <person name="Mattick J.S."/>
            <person name="Hume D.A."/>
            <person name="Kai C."/>
            <person name="Sasaki D."/>
            <person name="Tomaru Y."/>
            <person name="Fukuda S."/>
            <person name="Kanamori-Katayama M."/>
            <person name="Suzuki M."/>
            <person name="Aoki J."/>
            <person name="Arakawa T."/>
            <person name="Iida J."/>
            <person name="Imamura K."/>
            <person name="Itoh M."/>
            <person name="Kato T."/>
            <person name="Kawaji H."/>
            <person name="Kawagashira N."/>
            <person name="Kawashima T."/>
            <person name="Kojima M."/>
            <person name="Kondo S."/>
            <person name="Konno H."/>
            <person name="Nakano K."/>
            <person name="Ninomiya N."/>
            <person name="Nishio T."/>
            <person name="Okada M."/>
            <person name="Plessy C."/>
            <person name="Shibata K."/>
            <person name="Shiraki T."/>
            <person name="Suzuki S."/>
            <person name="Tagami M."/>
            <person name="Waki K."/>
            <person name="Watahiki A."/>
            <person name="Okamura-Oho Y."/>
            <person name="Suzuki H."/>
            <person name="Kawai J."/>
            <person name="Hayashizaki Y."/>
        </authorList>
    </citation>
    <scope>NUCLEOTIDE SEQUENCE [LARGE SCALE MRNA]</scope>
    <source>
        <strain>C57BL/6J</strain>
        <tissue>Kidney</tissue>
        <tissue>Placenta</tissue>
    </source>
</reference>
<reference key="3">
    <citation type="journal article" date="2009" name="PLoS Biol.">
        <title>Lineage-specific biology revealed by a finished genome assembly of the mouse.</title>
        <authorList>
            <person name="Church D.M."/>
            <person name="Goodstadt L."/>
            <person name="Hillier L.W."/>
            <person name="Zody M.C."/>
            <person name="Goldstein S."/>
            <person name="She X."/>
            <person name="Bult C.J."/>
            <person name="Agarwala R."/>
            <person name="Cherry J.L."/>
            <person name="DiCuccio M."/>
            <person name="Hlavina W."/>
            <person name="Kapustin Y."/>
            <person name="Meric P."/>
            <person name="Maglott D."/>
            <person name="Birtle Z."/>
            <person name="Marques A.C."/>
            <person name="Graves T."/>
            <person name="Zhou S."/>
            <person name="Teague B."/>
            <person name="Potamousis K."/>
            <person name="Churas C."/>
            <person name="Place M."/>
            <person name="Herschleb J."/>
            <person name="Runnheim R."/>
            <person name="Forrest D."/>
            <person name="Amos-Landgraf J."/>
            <person name="Schwartz D.C."/>
            <person name="Cheng Z."/>
            <person name="Lindblad-Toh K."/>
            <person name="Eichler E.E."/>
            <person name="Ponting C.P."/>
        </authorList>
    </citation>
    <scope>NUCLEOTIDE SEQUENCE [LARGE SCALE GENOMIC DNA]</scope>
    <source>
        <strain>C57BL/6J</strain>
    </source>
</reference>
<reference key="4">
    <citation type="submission" date="2005-07" db="EMBL/GenBank/DDBJ databases">
        <authorList>
            <person name="Mural R.J."/>
            <person name="Adams M.D."/>
            <person name="Myers E.W."/>
            <person name="Smith H.O."/>
            <person name="Venter J.C."/>
        </authorList>
    </citation>
    <scope>NUCLEOTIDE SEQUENCE [LARGE SCALE GENOMIC DNA]</scope>
</reference>
<reference key="5">
    <citation type="journal article" date="2004" name="Genome Res.">
        <title>The status, quality, and expansion of the NIH full-length cDNA project: the Mammalian Gene Collection (MGC).</title>
        <authorList>
            <consortium name="The MGC Project Team"/>
        </authorList>
    </citation>
    <scope>NUCLEOTIDE SEQUENCE [LARGE SCALE MRNA]</scope>
    <source>
        <strain>FVB/N</strain>
        <tissue>Mammary gland</tissue>
    </source>
</reference>
<reference key="6">
    <citation type="journal article" date="1996" name="J. Biol. Chem.">
        <title>Direct association between the Ret receptor tyrosine kinase and the Src homology 2-containing adapter protein Grb7.</title>
        <authorList>
            <person name="Pandey A."/>
            <person name="Liu X."/>
            <person name="Dixon J.E."/>
            <person name="Di Fiore P.P."/>
            <person name="Dixit V.M."/>
        </authorList>
    </citation>
    <scope>INTERACTION WITH RET</scope>
    <scope>TYROSINE PHOSPHORYLATION</scope>
</reference>
<reference key="7">
    <citation type="journal article" date="1996" name="J. Biol. Chem.">
        <title>Grb7 is a downstream signaling component of platelet-derived growth factor alpha- and beta-receptors.</title>
        <authorList>
            <person name="Yokote K."/>
            <person name="Margolis B."/>
            <person name="Heldin C.H."/>
            <person name="Claesson-Welsh L."/>
        </authorList>
    </citation>
    <scope>INTERACTION WITH PDGFRA; PDGFRB AND SHC1</scope>
</reference>
<reference key="8">
    <citation type="journal article" date="1999" name="Biochem. J.">
        <title>Identification of Tyr-703 and Tyr-936 as the primary association sites for Grb2 and Grb7 in the c-Kit/stem cell factor receptor.</title>
        <authorList>
            <person name="Thommes K."/>
            <person name="Lennartsson J."/>
            <person name="Carlberg M."/>
            <person name="Ronnstrand L."/>
        </authorList>
    </citation>
    <scope>INTERACTION WITH KIT</scope>
</reference>
<reference key="9">
    <citation type="journal article" date="1999" name="J. Biol. Chem.">
        <title>Identification of Tek/Tie2 binding partners. Binding to a multifunctional docking site mediates cell survival and migration.</title>
        <authorList>
            <person name="Jones N."/>
            <person name="Master Z."/>
            <person name="Jones J."/>
            <person name="Bouchard D."/>
            <person name="Gunji Y."/>
            <person name="Sasaki H."/>
            <person name="Daly R."/>
            <person name="Alitalo K."/>
            <person name="Dumont D.J."/>
        </authorList>
    </citation>
    <scope>INTERACTION WITH TEK/TIE2</scope>
    <scope>PHOSPHORYLATION</scope>
</reference>
<reference key="10">
    <citation type="journal article" date="2007" name="EMBO J.">
        <title>The adaptor Grb7 links netrin-1 signaling to regulation of mRNA translation.</title>
        <authorList>
            <person name="Tsai N.P."/>
            <person name="Bi J."/>
            <person name="Wei L.N."/>
        </authorList>
    </citation>
    <scope>FUNCTION</scope>
    <scope>INTERACTION WITH PTK2/FAK1</scope>
    <scope>PHOSPHORYLATION</scope>
    <scope>RNA-BINDING</scope>
    <scope>MUTAGENESIS OF TYR-483 AND TYR-495</scope>
</reference>
<reference key="11">
    <citation type="journal article" date="2007" name="Proc. Natl. Acad. Sci. U.S.A.">
        <title>Large-scale phosphorylation analysis of mouse liver.</title>
        <authorList>
            <person name="Villen J."/>
            <person name="Beausoleil S.A."/>
            <person name="Gerber S.A."/>
            <person name="Gygi S.P."/>
        </authorList>
    </citation>
    <scope>IDENTIFICATION BY MASS SPECTROMETRY [LARGE SCALE ANALYSIS]</scope>
    <source>
        <tissue>Liver</tissue>
    </source>
</reference>
<reference key="12">
    <citation type="journal article" date="2008" name="EMBO J.">
        <title>Regulation of stress granule dynamics by Grb7 and FAK signalling pathway.</title>
        <authorList>
            <person name="Tsai N.P."/>
            <person name="Ho P.C."/>
            <person name="Wei L.N."/>
        </authorList>
    </citation>
    <scope>FUNCTION</scope>
    <scope>SUBCELLULAR LOCATION</scope>
    <scope>PHOSPHORYLATION</scope>
    <scope>INTERACTION WITH ELAVL1</scope>
    <scope>IDENTIFICATION IN A COMPLEX WITH PTK2/FAK1; ELAVL1 AND TIA1</scope>
</reference>
<reference key="13">
    <citation type="journal article" date="2010" name="Cell">
        <title>A tissue-specific atlas of mouse protein phosphorylation and expression.</title>
        <authorList>
            <person name="Huttlin E.L."/>
            <person name="Jedrychowski M.P."/>
            <person name="Elias J.E."/>
            <person name="Goswami T."/>
            <person name="Rad R."/>
            <person name="Beausoleil S.A."/>
            <person name="Villen J."/>
            <person name="Haas W."/>
            <person name="Sowa M.E."/>
            <person name="Gygi S.P."/>
        </authorList>
    </citation>
    <scope>IDENTIFICATION BY MASS SPECTROMETRY [LARGE SCALE ANALYSIS]</scope>
    <source>
        <tissue>Kidney</tissue>
        <tissue>Liver</tissue>
    </source>
</reference>
<comment type="function">
    <text evidence="1 9 10">Adapter protein that interacts with the cytoplasmic domain of numerous receptor kinases and modulates down-stream signaling. Promotes activation of down-stream protein kinases, including STAT3, AKT1, MAPK1 and/or MAPK3. Promotes activation of HRAS. Plays a role in signal transduction in response to EGF. Plays a role in the regulation of cell proliferation and cell migration (By similarity). Plays a role in the assembly and stability of RNA stress granules. Binds to the 5'UTR of target mRNA molecules and represses translation of target mRNA species, when not phosphorylated. Phosphorylation impairs RNA binding and promotes stress granule disassembly during recovery after cellular stress.</text>
</comment>
<comment type="subunit">
    <text evidence="1 7 8 9 10 11 12">Homodimer. Interacts (via SH2 domain) with EGFR, ERBB2, ERBB3 (when phosphorylated), ERBB4 (when phosphorylated), EPHB1, INSR, FGFR1, PDGFRA (tyrosine phosphorylated) and PDGFRB (tyrosine phosphorylated). Interacts with SHC1. Interacts with RND1. Interacts (when tyrosine phosphorylated) with FHL2 and HAX1 (By similarity). Interacts (via SH2 domain) with RET and PTK2/FAK1. Interacts (when not phosphorylated) with ELAVL1. In stressed cells, but not in normal cells, part of a complex that contains at least GRB7, PTK2/FAK1, STAU1, ELAVL1 and TIA1. Interacts (via SH2 domain) with KIT (phosphorylated). Interacts (via SH2 domain) with TEK/TIE2 (tyrosine phosphorylated).</text>
</comment>
<comment type="interaction">
    <interactant intactId="EBI-7100053">
        <id>Q03160</id>
    </interactant>
    <interactant intactId="EBI-6877056">
        <id>P70372</id>
        <label>Elavl1</label>
    </interactant>
    <organismsDiffer>false</organismsDiffer>
    <experiments>7</experiments>
</comment>
<comment type="interaction">
    <interactant intactId="EBI-7100053">
        <id>Q03160</id>
    </interactant>
    <interactant intactId="EBI-7099626">
        <id>Q02858</id>
        <label>Tek</label>
    </interactant>
    <organismsDiffer>false</organismsDiffer>
    <experiments>3</experiments>
</comment>
<comment type="interaction">
    <interactant intactId="EBI-7100053">
        <id>Q03160</id>
    </interactant>
    <interactant intactId="EBI-7809240">
        <id>Q80ZW7</id>
        <label>Tia1</label>
    </interactant>
    <organismsDiffer>false</organismsDiffer>
    <experiments>4</experiments>
</comment>
<comment type="interaction">
    <interactant intactId="EBI-7100053">
        <id>Q03160</id>
    </interactant>
    <interactant intactId="EBI-603614">
        <id>Q03135</id>
        <label>CAV1</label>
    </interactant>
    <organismsDiffer>true</organismsDiffer>
    <experiments>3</experiments>
</comment>
<comment type="subcellular location">
    <subcellularLocation>
        <location evidence="10">Cytoplasm</location>
    </subcellularLocation>
    <subcellularLocation>
        <location evidence="2">Cell projection</location>
    </subcellularLocation>
    <subcellularLocation>
        <location evidence="2">Cell junction</location>
        <location evidence="2">Focal adhesion</location>
    </subcellularLocation>
    <subcellularLocation>
        <location evidence="2">Cell membrane</location>
        <topology evidence="2">Peripheral membrane protein</topology>
        <orientation evidence="2">Cytoplasmic side</orientation>
    </subcellularLocation>
    <subcellularLocation>
        <location evidence="10">Cytoplasmic granule</location>
    </subcellularLocation>
    <text evidence="10">Predominantly cytoplasmic. Detected in stress granules where mRNA is stored under stress conditions.</text>
</comment>
<comment type="domain">
    <text evidence="1">The PH domain mediates interaction with membranes containing phosphoinositides.</text>
</comment>
<comment type="PTM">
    <text evidence="1 8 9 10">Phosphorylated on serine and threonine residues in response to activation of receptor kinases. Phosphorylated on tyrosine residues by TEK/TIE2. Phosphorylated on tyrosine residues by PTK2/FAK1, and possibly also other kinases. Phosphorylation is enhanced by activation of receptor kinases. Tyrosine phosphorylation is essential for activation of down-stream protein kinases (By similarity). Phosphorylated on tyrosine residues in response to NTN1 signaling. Phosphorylation promotes stress granule disassembly during recovery after cellular stress.</text>
</comment>
<comment type="similarity">
    <text evidence="13">Belongs to the GRB7/10/14 family.</text>
</comment>
<sequence length="535" mass="59959">MELDLSPTHLSSSPEDVCPTPATPPETPPPPDNPPPGDVKRSQPLPIPSSRKLREEEFQATSLPSIPNPFPELCSPPSQKPILGGSSGARGLLPRDSSRLCVVKVYSEDGACRSVEVAAGATARHVCEMLVQRAHALSDESWGLVESHPYLALERGLEDHEFVVEVQEAWPVGGDSRFIFRKNFAKYELFKSPPHTLFPEKMVSSCLDAQTGISHEDLIQNFLNAGSFPEIQGFLQLRGSGRGSGRKLWKRFFCFLRRSGLYYSTKGTSKDPRHLQYVADVNESNVYVVTQGRKLYGMPTDFGFCVKPNKLRNGHKGLHIFCSEDEQSRTCWLAAFRLFKYGVQLYKNYQQAQSRHLRLSYLGSPPLRSVSDNTLVAMDFSGHAGRVIDNPREALSAAMEEAQAWRKKTNHRLSLPTTCSGSSLSAAIHRTQPWFHGRISREESQRLIGQQGLVDGVFLVRESQRNPQGFVLSLCHLQKVKHYLILPSEDEGCLYFSMDEGQTRFTDLLQLVEFHQLNRGILPCLLRHCCARVAL</sequence>
<proteinExistence type="evidence at protein level"/>
<protein>
    <recommendedName>
        <fullName>Growth factor receptor-bound protein 7</fullName>
    </recommendedName>
    <alternativeName>
        <fullName>Epidermal growth factor receptor GRB-7</fullName>
    </alternativeName>
    <alternativeName>
        <fullName>GRB7 adapter protein</fullName>
    </alternativeName>
</protein>
<accession>Q03160</accession>
<accession>Q3TH55</accession>